<gene>
    <name type="primary">rpl13</name>
</gene>
<protein>
    <recommendedName>
        <fullName evidence="2">Large ribosomal subunit protein eL13</fullName>
    </recommendedName>
    <alternativeName>
        <fullName>60S ribosomal protein L13</fullName>
    </alternativeName>
</protein>
<proteinExistence type="evidence at protein level"/>
<evidence type="ECO:0000250" key="1">
    <source>
        <dbReference type="UniProtKB" id="P26373"/>
    </source>
</evidence>
<evidence type="ECO:0000305" key="2"/>
<keyword id="KW-0002">3D-structure</keyword>
<keyword id="KW-0963">Cytoplasm</keyword>
<keyword id="KW-1185">Reference proteome</keyword>
<keyword id="KW-0687">Ribonucleoprotein</keyword>
<keyword id="KW-0689">Ribosomal protein</keyword>
<feature type="chain" id="PRO_0000192923" description="Large ribosomal subunit protein eL13">
    <location>
        <begin position="1"/>
        <end position="211"/>
    </location>
</feature>
<comment type="function">
    <text evidence="1">Component of the ribosome, a large ribonucleoprotein complex responsible for the synthesis of proteins in the cell. The small ribosomal subunit (SSU) binds messenger RNAs (mRNAs) and translates the encoded message by selecting cognate aminoacyl-transfer RNA (tRNA) molecules. The large subunit (LSU) contains the ribosomal catalytic site termed the peptidyl transferase center (PTC), which catalyzes the formation of peptide bonds, thereby polymerizing the amino acids delivered by tRNAs into a polypeptide chain. The nascent polypeptides leave the ribosome through a tunnel in the LSU and interact with protein factors that function in enzymatic processing, targeting, and the membrane insertion of nascent chains at the exit of the ribosomal tunnel. As part of the LSU, it is probably required for its formation and the maturation of rRNAs.</text>
</comment>
<comment type="subunit">
    <text evidence="1">Component of the 60S large ribosomal subunit (LSU).</text>
</comment>
<comment type="subcellular location">
    <subcellularLocation>
        <location evidence="1">Cytoplasm</location>
    </subcellularLocation>
</comment>
<comment type="similarity">
    <text evidence="2">Belongs to the eukaryotic ribosomal protein eL13 family.</text>
</comment>
<dbReference type="EMBL" id="AF385081">
    <property type="protein sequence ID" value="AAK63073.1"/>
    <property type="molecule type" value="mRNA"/>
</dbReference>
<dbReference type="EMBL" id="AY561516">
    <property type="protein sequence ID" value="AAS66969.1"/>
    <property type="molecule type" value="mRNA"/>
</dbReference>
<dbReference type="EMBL" id="BC075977">
    <property type="protein sequence ID" value="AAH75977.1"/>
    <property type="molecule type" value="mRNA"/>
</dbReference>
<dbReference type="RefSeq" id="NP_937786.1">
    <property type="nucleotide sequence ID" value="NM_198143.1"/>
</dbReference>
<dbReference type="RefSeq" id="XP_005166723.1">
    <property type="nucleotide sequence ID" value="XM_005166666.5"/>
</dbReference>
<dbReference type="PDB" id="7OYA">
    <property type="method" value="EM"/>
    <property type="resolution" value="3.20 A"/>
    <property type="chains" value="L1=1-211"/>
</dbReference>
<dbReference type="PDB" id="7OYB">
    <property type="method" value="EM"/>
    <property type="resolution" value="2.40 A"/>
    <property type="chains" value="L1=1-211"/>
</dbReference>
<dbReference type="PDBsum" id="7OYA"/>
<dbReference type="PDBsum" id="7OYB"/>
<dbReference type="EMDB" id="EMD-13111"/>
<dbReference type="EMDB" id="EMD-13112"/>
<dbReference type="SMR" id="Q90Z10"/>
<dbReference type="FunCoup" id="Q90Z10">
    <property type="interactions" value="2363"/>
</dbReference>
<dbReference type="STRING" id="7955.ENSDARP00000132139"/>
<dbReference type="PaxDb" id="7955-ENSDARP00000047390"/>
<dbReference type="Ensembl" id="ENSDART00000168460">
    <property type="protein sequence ID" value="ENSDARP00000132139"/>
    <property type="gene ID" value="ENSDARG00000099380"/>
</dbReference>
<dbReference type="Ensembl" id="ENSDART00000176368">
    <property type="protein sequence ID" value="ENSDARP00000144370"/>
    <property type="gene ID" value="ENSDARG00000099380"/>
</dbReference>
<dbReference type="GeneID" id="378961"/>
<dbReference type="KEGG" id="dre:378961"/>
<dbReference type="AGR" id="ZFIN:ZDB-GENE-031007-1"/>
<dbReference type="CTD" id="6137"/>
<dbReference type="ZFIN" id="ZDB-GENE-031007-1">
    <property type="gene designation" value="rpl13"/>
</dbReference>
<dbReference type="eggNOG" id="KOG3295">
    <property type="taxonomic scope" value="Eukaryota"/>
</dbReference>
<dbReference type="HOGENOM" id="CLU_075696_1_0_1"/>
<dbReference type="InParanoid" id="Q90Z10"/>
<dbReference type="OMA" id="IQKNHFR"/>
<dbReference type="OrthoDB" id="10264538at2759"/>
<dbReference type="PhylomeDB" id="Q90Z10"/>
<dbReference type="TreeFam" id="TF300073"/>
<dbReference type="Reactome" id="R-DRE-156827">
    <property type="pathway name" value="L13a-mediated translational silencing of Ceruloplasmin expression"/>
</dbReference>
<dbReference type="Reactome" id="R-DRE-1799339">
    <property type="pathway name" value="SRP-dependent cotranslational protein targeting to membrane"/>
</dbReference>
<dbReference type="Reactome" id="R-DRE-72689">
    <property type="pathway name" value="Formation of a pool of free 40S subunits"/>
</dbReference>
<dbReference type="Reactome" id="R-DRE-975956">
    <property type="pathway name" value="Nonsense Mediated Decay (NMD) independent of the Exon Junction Complex (EJC)"/>
</dbReference>
<dbReference type="Reactome" id="R-DRE-975957">
    <property type="pathway name" value="Nonsense Mediated Decay (NMD) enhanced by the Exon Junction Complex (EJC)"/>
</dbReference>
<dbReference type="PRO" id="PR:Q90Z10"/>
<dbReference type="Proteomes" id="UP000000437">
    <property type="component" value="Chromosome 7"/>
</dbReference>
<dbReference type="Bgee" id="ENSDARG00000099380">
    <property type="expression patterns" value="Expressed in granulocyte and 27 other cell types or tissues"/>
</dbReference>
<dbReference type="ExpressionAtlas" id="Q90Z10">
    <property type="expression patterns" value="baseline"/>
</dbReference>
<dbReference type="GO" id="GO:0022625">
    <property type="term" value="C:cytosolic large ribosomal subunit"/>
    <property type="evidence" value="ECO:0000318"/>
    <property type="project" value="GO_Central"/>
</dbReference>
<dbReference type="GO" id="GO:0003723">
    <property type="term" value="F:RNA binding"/>
    <property type="evidence" value="ECO:0000318"/>
    <property type="project" value="GO_Central"/>
</dbReference>
<dbReference type="GO" id="GO:0003735">
    <property type="term" value="F:structural constituent of ribosome"/>
    <property type="evidence" value="ECO:0000318"/>
    <property type="project" value="GO_Central"/>
</dbReference>
<dbReference type="GO" id="GO:0048701">
    <property type="term" value="P:embryonic cranial skeleton morphogenesis"/>
    <property type="evidence" value="ECO:0000315"/>
    <property type="project" value="ZFIN"/>
</dbReference>
<dbReference type="GO" id="GO:0051726">
    <property type="term" value="P:regulation of cell cycle"/>
    <property type="evidence" value="ECO:0000315"/>
    <property type="project" value="ZFIN"/>
</dbReference>
<dbReference type="GO" id="GO:0006412">
    <property type="term" value="P:translation"/>
    <property type="evidence" value="ECO:0007669"/>
    <property type="project" value="InterPro"/>
</dbReference>
<dbReference type="FunFam" id="1.20.5.110:FF:000003">
    <property type="entry name" value="60S ribosomal protein L13"/>
    <property type="match status" value="1"/>
</dbReference>
<dbReference type="Gene3D" id="1.20.5.110">
    <property type="match status" value="1"/>
</dbReference>
<dbReference type="HAMAP" id="MF_00499">
    <property type="entry name" value="Ribosomal_eL13"/>
    <property type="match status" value="1"/>
</dbReference>
<dbReference type="InterPro" id="IPR001380">
    <property type="entry name" value="Ribosomal_eL13"/>
</dbReference>
<dbReference type="InterPro" id="IPR018256">
    <property type="entry name" value="Ribosomal_eL13_CS"/>
</dbReference>
<dbReference type="PANTHER" id="PTHR11722">
    <property type="entry name" value="60S RIBOSOMAL PROTEIN L13"/>
    <property type="match status" value="1"/>
</dbReference>
<dbReference type="PANTHER" id="PTHR11722:SF0">
    <property type="entry name" value="LARGE RIBOSOMAL SUBUNIT PROTEIN EL13"/>
    <property type="match status" value="1"/>
</dbReference>
<dbReference type="Pfam" id="PF01294">
    <property type="entry name" value="Ribosomal_L13e"/>
    <property type="match status" value="1"/>
</dbReference>
<dbReference type="PROSITE" id="PS01104">
    <property type="entry name" value="RIBOSOMAL_L13E"/>
    <property type="match status" value="1"/>
</dbReference>
<name>RL13_DANRE</name>
<sequence length="211" mass="24365">MAPSRNGMILNPHFHKDWQKRVRTWFNQPARKIRRRKARQAKARRIAPRPVSGPLRPVVRCPTIRYHTKVRAGRGFTLEELKAAGINKKVARTIGISVDSRRRNRSTESLQANVQRLKEYRTKLIIFPRKAAKPKKGDSTEEELKMATQLTGPVMPIKKVHKKEKARVISEDEKNFKAFASLRMARANARLFGIRAKRAKEAAEQDVEKKK</sequence>
<accession>Q90Z10</accession>
<reference key="1">
    <citation type="submission" date="2001-05" db="EMBL/GenBank/DDBJ databases">
        <title>Molecular cloning of the zebrafish 60S ribosomal protein L13 (Breast basic conserved protein 1 homolog).</title>
        <authorList>
            <person name="Miller V.M."/>
            <person name="Rebagliati M.R."/>
            <person name="Paulson H.L."/>
        </authorList>
    </citation>
    <scope>NUCLEOTIDE SEQUENCE [MRNA]</scope>
</reference>
<reference key="2">
    <citation type="journal article" date="2004" name="PLoS Biol.">
        <title>Many ribosomal protein genes are cancer genes in zebrafish.</title>
        <authorList>
            <person name="Amsterdam A."/>
            <person name="Sadler K.C."/>
            <person name="Lai K."/>
            <person name="Farrington S."/>
            <person name="Bronson R.T."/>
            <person name="Lees J.A."/>
            <person name="Hopkins N."/>
        </authorList>
    </citation>
    <scope>NUCLEOTIDE SEQUENCE [MRNA]</scope>
</reference>
<reference key="3">
    <citation type="submission" date="2004-07" db="EMBL/GenBank/DDBJ databases">
        <authorList>
            <consortium name="NIH - Zebrafish Gene Collection (ZGC) project"/>
        </authorList>
    </citation>
    <scope>NUCLEOTIDE SEQUENCE [LARGE SCALE MRNA]</scope>
</reference>
<organism>
    <name type="scientific">Danio rerio</name>
    <name type="common">Zebrafish</name>
    <name type="synonym">Brachydanio rerio</name>
    <dbReference type="NCBI Taxonomy" id="7955"/>
    <lineage>
        <taxon>Eukaryota</taxon>
        <taxon>Metazoa</taxon>
        <taxon>Chordata</taxon>
        <taxon>Craniata</taxon>
        <taxon>Vertebrata</taxon>
        <taxon>Euteleostomi</taxon>
        <taxon>Actinopterygii</taxon>
        <taxon>Neopterygii</taxon>
        <taxon>Teleostei</taxon>
        <taxon>Ostariophysi</taxon>
        <taxon>Cypriniformes</taxon>
        <taxon>Danionidae</taxon>
        <taxon>Danioninae</taxon>
        <taxon>Danio</taxon>
    </lineage>
</organism>